<gene>
    <name type="primary">glk</name>
    <name type="ordered locus">Bcep18194_A4068</name>
</gene>
<sequence>MSTGAQSKAAVAGQHADGPRLLADVGGTNARFALETGPGDITQIRVYPGADYPTLTDAIRKYLKDVKITRVNHAAIAIANPVDGDQVTMTNHDWSFSIEATRRALGFDTLLVVNDFTALAMALPGLTDAQRVQIGGGARRQNSVIGLLGPGTGLGVSGLIPADDRWIALGSEGGHASFAPQDEREDLVLQYARKKFPHVSFERVCAGPGMEIIYRALAARDKKRVAATVDTVEIVERAHAGDALALETVECFCGILGAFAGSVALTLGALGGVYIGGGVALKLGELFTRSSFRARFEAKGRFTHYLENIPTYLITAEYPAFLGVSAILAEQLSNRSGGASSAVFERIRQMRDALTPAERRVADLALNHPRSIINDPIVDIARKADVSQPTVIRFCRSLGCQGLSDFKLKLATGLTGTIPMSHSQVHLGDTATDFGAKVLDNTVSAILQLREHLNFEHVENAIEILNGARRIEFYGLGNSNIVAQDAHYKFFRFGIPTIAYGDLYMQAASAALLGKGDVIVAVSKSGRAPELLRVLDVAMQAGAKVIAITSSNTPLAKRATVALETDHIEMRESQLSMISRILHLLMIDILAVGVAIRRASTNGELPEAVAQAKARASDDETADVLDWLSHGASPAAKDVARD</sequence>
<organism>
    <name type="scientific">Burkholderia lata (strain ATCC 17760 / DSM 23089 / LMG 22485 / NCIMB 9086 / R18194 / 383)</name>
    <dbReference type="NCBI Taxonomy" id="482957"/>
    <lineage>
        <taxon>Bacteria</taxon>
        <taxon>Pseudomonadati</taxon>
        <taxon>Pseudomonadota</taxon>
        <taxon>Betaproteobacteria</taxon>
        <taxon>Burkholderiales</taxon>
        <taxon>Burkholderiaceae</taxon>
        <taxon>Burkholderia</taxon>
        <taxon>Burkholderia cepacia complex</taxon>
    </lineage>
</organism>
<reference key="1">
    <citation type="submission" date="2005-10" db="EMBL/GenBank/DDBJ databases">
        <title>Complete sequence of chromosome 1 of Burkholderia sp. 383.</title>
        <authorList>
            <consortium name="US DOE Joint Genome Institute"/>
            <person name="Copeland A."/>
            <person name="Lucas S."/>
            <person name="Lapidus A."/>
            <person name="Barry K."/>
            <person name="Detter J.C."/>
            <person name="Glavina T."/>
            <person name="Hammon N."/>
            <person name="Israni S."/>
            <person name="Pitluck S."/>
            <person name="Chain P."/>
            <person name="Malfatti S."/>
            <person name="Shin M."/>
            <person name="Vergez L."/>
            <person name="Schmutz J."/>
            <person name="Larimer F."/>
            <person name="Land M."/>
            <person name="Kyrpides N."/>
            <person name="Lykidis A."/>
            <person name="Richardson P."/>
        </authorList>
    </citation>
    <scope>NUCLEOTIDE SEQUENCE [LARGE SCALE GENOMIC DNA]</scope>
    <source>
        <strain>ATCC 17760 / DSM 23089 / LMG 22485 / NCIMB 9086 / R18194 / 383</strain>
    </source>
</reference>
<feature type="chain" id="PRO_0000268800" description="Bifunctional protein glk">
    <location>
        <begin position="1"/>
        <end position="642"/>
    </location>
</feature>
<feature type="transmembrane region" description="Helical" evidence="2">
    <location>
        <begin position="576"/>
        <end position="596"/>
    </location>
</feature>
<feature type="domain" description="HTH rpiR-type">
    <location>
        <begin position="341"/>
        <end position="417"/>
    </location>
</feature>
<feature type="domain" description="SIS">
    <location>
        <begin position="461"/>
        <end position="600"/>
    </location>
</feature>
<feature type="DNA-binding region" description="H-T-H motif" evidence="1">
    <location>
        <begin position="377"/>
        <end position="396"/>
    </location>
</feature>
<feature type="region of interest" description="Glucokinase">
    <location>
        <begin position="1"/>
        <end position="340"/>
    </location>
</feature>
<feature type="region of interest" description="Putative HTH-type transcriptional regulator">
    <location>
        <begin position="341"/>
        <end position="642"/>
    </location>
</feature>
<feature type="binding site" evidence="2">
    <location>
        <begin position="23"/>
        <end position="28"/>
    </location>
    <ligand>
        <name>ATP</name>
        <dbReference type="ChEBI" id="CHEBI:30616"/>
    </ligand>
</feature>
<evidence type="ECO:0000250" key="1"/>
<evidence type="ECO:0000255" key="2"/>
<evidence type="ECO:0000305" key="3"/>
<keyword id="KW-0067">ATP-binding</keyword>
<keyword id="KW-0238">DNA-binding</keyword>
<keyword id="KW-0324">Glycolysis</keyword>
<keyword id="KW-0418">Kinase</keyword>
<keyword id="KW-0472">Membrane</keyword>
<keyword id="KW-0511">Multifunctional enzyme</keyword>
<keyword id="KW-0547">Nucleotide-binding</keyword>
<keyword id="KW-0804">Transcription</keyword>
<keyword id="KW-0805">Transcription regulation</keyword>
<keyword id="KW-0808">Transferase</keyword>
<keyword id="KW-0812">Transmembrane</keyword>
<keyword id="KW-1133">Transmembrane helix</keyword>
<proteinExistence type="inferred from homology"/>
<name>GLK_BURL3</name>
<accession>Q39IQ1</accession>
<dbReference type="EC" id="2.7.1.2"/>
<dbReference type="EMBL" id="CP000151">
    <property type="protein sequence ID" value="ABB07665.1"/>
    <property type="molecule type" value="Genomic_DNA"/>
</dbReference>
<dbReference type="RefSeq" id="WP_011351246.1">
    <property type="nucleotide sequence ID" value="NC_007510.1"/>
</dbReference>
<dbReference type="SMR" id="Q39IQ1"/>
<dbReference type="GeneID" id="45093964"/>
<dbReference type="KEGG" id="bur:Bcep18194_A4068"/>
<dbReference type="PATRIC" id="fig|482957.22.peg.949"/>
<dbReference type="HOGENOM" id="CLU_016801_0_0_4"/>
<dbReference type="Proteomes" id="UP000002705">
    <property type="component" value="Chromosome 1"/>
</dbReference>
<dbReference type="GO" id="GO:0005829">
    <property type="term" value="C:cytosol"/>
    <property type="evidence" value="ECO:0007669"/>
    <property type="project" value="TreeGrafter"/>
</dbReference>
<dbReference type="GO" id="GO:0016020">
    <property type="term" value="C:membrane"/>
    <property type="evidence" value="ECO:0007669"/>
    <property type="project" value="UniProtKB-SubCell"/>
</dbReference>
<dbReference type="GO" id="GO:0005524">
    <property type="term" value="F:ATP binding"/>
    <property type="evidence" value="ECO:0007669"/>
    <property type="project" value="UniProtKB-UniRule"/>
</dbReference>
<dbReference type="GO" id="GO:0005536">
    <property type="term" value="F:D-glucose binding"/>
    <property type="evidence" value="ECO:0007669"/>
    <property type="project" value="InterPro"/>
</dbReference>
<dbReference type="GO" id="GO:0003677">
    <property type="term" value="F:DNA binding"/>
    <property type="evidence" value="ECO:0007669"/>
    <property type="project" value="UniProtKB-KW"/>
</dbReference>
<dbReference type="GO" id="GO:0003700">
    <property type="term" value="F:DNA-binding transcription factor activity"/>
    <property type="evidence" value="ECO:0007669"/>
    <property type="project" value="InterPro"/>
</dbReference>
<dbReference type="GO" id="GO:0004340">
    <property type="term" value="F:glucokinase activity"/>
    <property type="evidence" value="ECO:0007669"/>
    <property type="project" value="UniProtKB-UniRule"/>
</dbReference>
<dbReference type="GO" id="GO:0006096">
    <property type="term" value="P:glycolytic process"/>
    <property type="evidence" value="ECO:0007669"/>
    <property type="project" value="UniProtKB-UniRule"/>
</dbReference>
<dbReference type="CDD" id="cd24008">
    <property type="entry name" value="ASKHA_NBD_GLK"/>
    <property type="match status" value="1"/>
</dbReference>
<dbReference type="CDD" id="cd05013">
    <property type="entry name" value="SIS_RpiR"/>
    <property type="match status" value="1"/>
</dbReference>
<dbReference type="Gene3D" id="3.30.420.40">
    <property type="match status" value="1"/>
</dbReference>
<dbReference type="Gene3D" id="3.40.367.20">
    <property type="match status" value="1"/>
</dbReference>
<dbReference type="Gene3D" id="3.40.50.10490">
    <property type="entry name" value="Glucose-6-phosphate isomerase like protein, domain 1"/>
    <property type="match status" value="1"/>
</dbReference>
<dbReference type="Gene3D" id="1.10.10.10">
    <property type="entry name" value="Winged helix-like DNA-binding domain superfamily/Winged helix DNA-binding domain"/>
    <property type="match status" value="1"/>
</dbReference>
<dbReference type="HAMAP" id="MF_00524">
    <property type="entry name" value="Glucokinase"/>
    <property type="match status" value="1"/>
</dbReference>
<dbReference type="InterPro" id="IPR043129">
    <property type="entry name" value="ATPase_NBD"/>
</dbReference>
<dbReference type="InterPro" id="IPR050201">
    <property type="entry name" value="Bacterial_glucokinase"/>
</dbReference>
<dbReference type="InterPro" id="IPR003836">
    <property type="entry name" value="Glucokinase"/>
</dbReference>
<dbReference type="InterPro" id="IPR009057">
    <property type="entry name" value="Homeodomain-like_sf"/>
</dbReference>
<dbReference type="InterPro" id="IPR000281">
    <property type="entry name" value="HTH_RpiR"/>
</dbReference>
<dbReference type="InterPro" id="IPR035472">
    <property type="entry name" value="RpiR-like_SIS"/>
</dbReference>
<dbReference type="InterPro" id="IPR001347">
    <property type="entry name" value="SIS_dom"/>
</dbReference>
<dbReference type="InterPro" id="IPR046348">
    <property type="entry name" value="SIS_dom_sf"/>
</dbReference>
<dbReference type="InterPro" id="IPR036388">
    <property type="entry name" value="WH-like_DNA-bd_sf"/>
</dbReference>
<dbReference type="NCBIfam" id="TIGR00749">
    <property type="entry name" value="glk"/>
    <property type="match status" value="1"/>
</dbReference>
<dbReference type="NCBIfam" id="NF001416">
    <property type="entry name" value="PRK00292.1-3"/>
    <property type="match status" value="1"/>
</dbReference>
<dbReference type="NCBIfam" id="NF010701">
    <property type="entry name" value="PRK14101.1"/>
    <property type="match status" value="1"/>
</dbReference>
<dbReference type="PANTHER" id="PTHR47690">
    <property type="entry name" value="GLUCOKINASE"/>
    <property type="match status" value="1"/>
</dbReference>
<dbReference type="PANTHER" id="PTHR47690:SF1">
    <property type="entry name" value="GLUCOKINASE"/>
    <property type="match status" value="1"/>
</dbReference>
<dbReference type="Pfam" id="PF02685">
    <property type="entry name" value="Glucokinase"/>
    <property type="match status" value="1"/>
</dbReference>
<dbReference type="Pfam" id="PF01418">
    <property type="entry name" value="HTH_6"/>
    <property type="match status" value="1"/>
</dbReference>
<dbReference type="Pfam" id="PF01380">
    <property type="entry name" value="SIS"/>
    <property type="match status" value="1"/>
</dbReference>
<dbReference type="SUPFAM" id="SSF53067">
    <property type="entry name" value="Actin-like ATPase domain"/>
    <property type="match status" value="1"/>
</dbReference>
<dbReference type="SUPFAM" id="SSF46689">
    <property type="entry name" value="Homeodomain-like"/>
    <property type="match status" value="1"/>
</dbReference>
<dbReference type="SUPFAM" id="SSF53697">
    <property type="entry name" value="SIS domain"/>
    <property type="match status" value="1"/>
</dbReference>
<dbReference type="PROSITE" id="PS00356">
    <property type="entry name" value="HTH_LACI_1"/>
    <property type="match status" value="1"/>
</dbReference>
<dbReference type="PROSITE" id="PS51071">
    <property type="entry name" value="HTH_RPIR"/>
    <property type="match status" value="1"/>
</dbReference>
<dbReference type="PROSITE" id="PS51464">
    <property type="entry name" value="SIS"/>
    <property type="match status" value="1"/>
</dbReference>
<protein>
    <recommendedName>
        <fullName>Bifunctional protein glk</fullName>
    </recommendedName>
    <domain>
        <recommendedName>
            <fullName>Glucokinase</fullName>
            <ecNumber>2.7.1.2</ecNumber>
        </recommendedName>
        <alternativeName>
            <fullName>Glucose kinase</fullName>
        </alternativeName>
    </domain>
    <domain>
        <recommendedName>
            <fullName>Putative HTH-type transcriptional regulator</fullName>
        </recommendedName>
    </domain>
</protein>
<comment type="catalytic activity">
    <reaction>
        <text>D-glucose + ATP = D-glucose 6-phosphate + ADP + H(+)</text>
        <dbReference type="Rhea" id="RHEA:17825"/>
        <dbReference type="ChEBI" id="CHEBI:4167"/>
        <dbReference type="ChEBI" id="CHEBI:15378"/>
        <dbReference type="ChEBI" id="CHEBI:30616"/>
        <dbReference type="ChEBI" id="CHEBI:61548"/>
        <dbReference type="ChEBI" id="CHEBI:456216"/>
        <dbReference type="EC" id="2.7.1.2"/>
    </reaction>
</comment>
<comment type="subcellular location">
    <subcellularLocation>
        <location evidence="3">Membrane</location>
        <topology evidence="3">Single-pass membrane protein</topology>
    </subcellularLocation>
</comment>
<comment type="similarity">
    <text evidence="3">In the N-terminal section; belongs to the bacterial glucokinase family.</text>
</comment>